<sequence length="309" mass="34747">MSIRIIPQDELGSSEKRTADMIPPLLFPRLKNLYNRRAERLRELAENNPLGDYLRFAALIAHAQEVVLYDHPLEMDLTARIKEASAQGKPPLDIHVLPRDKHWQKLLMALIAELKPEMSGPALAVIENLEKASTQELEDMASALFASDFSSVSSDKAPFIWAALSLYWAQMANLIPGKARAEYGEQRQYCPVCGSMPVSSMVQIGTTQGLRYLHCNLCETEWHVVRVKCSNCEQSGKLHYWSLDDEQAAIKAESCDDCDTYLKILYQEKDPKIEAVADDLASLVLDARMEQEGYARSSINPFLFPGEGE</sequence>
<proteinExistence type="inferred from homology"/>
<dbReference type="EMBL" id="CP000948">
    <property type="protein sequence ID" value="ACB04905.1"/>
    <property type="molecule type" value="Genomic_DNA"/>
</dbReference>
<dbReference type="RefSeq" id="WP_000027703.1">
    <property type="nucleotide sequence ID" value="NC_010473.1"/>
</dbReference>
<dbReference type="SMR" id="B1XB59"/>
<dbReference type="KEGG" id="ecd:ECDH10B_4081"/>
<dbReference type="HOGENOM" id="CLU_055275_0_0_6"/>
<dbReference type="GO" id="GO:0005829">
    <property type="term" value="C:cytosol"/>
    <property type="evidence" value="ECO:0007669"/>
    <property type="project" value="TreeGrafter"/>
</dbReference>
<dbReference type="GO" id="GO:0008199">
    <property type="term" value="F:ferric iron binding"/>
    <property type="evidence" value="ECO:0007669"/>
    <property type="project" value="TreeGrafter"/>
</dbReference>
<dbReference type="GO" id="GO:0051604">
    <property type="term" value="P:protein maturation"/>
    <property type="evidence" value="ECO:0007669"/>
    <property type="project" value="TreeGrafter"/>
</dbReference>
<dbReference type="CDD" id="cd16341">
    <property type="entry name" value="FdhE"/>
    <property type="match status" value="1"/>
</dbReference>
<dbReference type="FunFam" id="3.90.1670.10:FF:000001">
    <property type="entry name" value="Protein FdhE"/>
    <property type="match status" value="1"/>
</dbReference>
<dbReference type="Gene3D" id="3.90.1670.10">
    <property type="entry name" value="FdhE-like domain"/>
    <property type="match status" value="1"/>
</dbReference>
<dbReference type="HAMAP" id="MF_00611">
    <property type="entry name" value="FdeH"/>
    <property type="match status" value="1"/>
</dbReference>
<dbReference type="InterPro" id="IPR024064">
    <property type="entry name" value="FdhE-like_sf"/>
</dbReference>
<dbReference type="InterPro" id="IPR056796">
    <property type="entry name" value="FdhE_C"/>
</dbReference>
<dbReference type="InterPro" id="IPR056797">
    <property type="entry name" value="FdhE_central"/>
</dbReference>
<dbReference type="InterPro" id="IPR056774">
    <property type="entry name" value="FdhE_N"/>
</dbReference>
<dbReference type="InterPro" id="IPR006452">
    <property type="entry name" value="Formate_DH_accessory"/>
</dbReference>
<dbReference type="NCBIfam" id="TIGR01562">
    <property type="entry name" value="FdhE"/>
    <property type="match status" value="1"/>
</dbReference>
<dbReference type="NCBIfam" id="NF002925">
    <property type="entry name" value="PRK03564.1"/>
    <property type="match status" value="1"/>
</dbReference>
<dbReference type="PANTHER" id="PTHR37689">
    <property type="entry name" value="PROTEIN FDHE"/>
    <property type="match status" value="1"/>
</dbReference>
<dbReference type="PANTHER" id="PTHR37689:SF1">
    <property type="entry name" value="PROTEIN FDHE"/>
    <property type="match status" value="1"/>
</dbReference>
<dbReference type="Pfam" id="PF24860">
    <property type="entry name" value="FdhE_C"/>
    <property type="match status" value="1"/>
</dbReference>
<dbReference type="Pfam" id="PF24859">
    <property type="entry name" value="FdhE_central"/>
    <property type="match status" value="1"/>
</dbReference>
<dbReference type="Pfam" id="PF04216">
    <property type="entry name" value="FdhE_N"/>
    <property type="match status" value="1"/>
</dbReference>
<dbReference type="PIRSF" id="PIRSF018296">
    <property type="entry name" value="Format_dh_formtn"/>
    <property type="match status" value="1"/>
</dbReference>
<dbReference type="SUPFAM" id="SSF144020">
    <property type="entry name" value="FdhE-like"/>
    <property type="match status" value="1"/>
</dbReference>
<feature type="chain" id="PRO_1000130357" description="Protein FdhE">
    <location>
        <begin position="1"/>
        <end position="309"/>
    </location>
</feature>
<organism>
    <name type="scientific">Escherichia coli (strain K12 / DH10B)</name>
    <dbReference type="NCBI Taxonomy" id="316385"/>
    <lineage>
        <taxon>Bacteria</taxon>
        <taxon>Pseudomonadati</taxon>
        <taxon>Pseudomonadota</taxon>
        <taxon>Gammaproteobacteria</taxon>
        <taxon>Enterobacterales</taxon>
        <taxon>Enterobacteriaceae</taxon>
        <taxon>Escherichia</taxon>
    </lineage>
</organism>
<evidence type="ECO:0000255" key="1">
    <source>
        <dbReference type="HAMAP-Rule" id="MF_00611"/>
    </source>
</evidence>
<reference key="1">
    <citation type="journal article" date="2008" name="J. Bacteriol.">
        <title>The complete genome sequence of Escherichia coli DH10B: insights into the biology of a laboratory workhorse.</title>
        <authorList>
            <person name="Durfee T."/>
            <person name="Nelson R."/>
            <person name="Baldwin S."/>
            <person name="Plunkett G. III"/>
            <person name="Burland V."/>
            <person name="Mau B."/>
            <person name="Petrosino J.F."/>
            <person name="Qin X."/>
            <person name="Muzny D.M."/>
            <person name="Ayele M."/>
            <person name="Gibbs R.A."/>
            <person name="Csorgo B."/>
            <person name="Posfai G."/>
            <person name="Weinstock G.M."/>
            <person name="Blattner F.R."/>
        </authorList>
    </citation>
    <scope>NUCLEOTIDE SEQUENCE [LARGE SCALE GENOMIC DNA]</scope>
    <source>
        <strain>K12 / DH10B</strain>
    </source>
</reference>
<comment type="function">
    <text evidence="1">Necessary for formate dehydrogenase activity.</text>
</comment>
<comment type="subcellular location">
    <subcellularLocation>
        <location evidence="1">Cytoplasm</location>
    </subcellularLocation>
</comment>
<comment type="similarity">
    <text evidence="1">Belongs to the FdhE family.</text>
</comment>
<protein>
    <recommendedName>
        <fullName evidence="1">Protein FdhE</fullName>
    </recommendedName>
</protein>
<name>FDHE_ECODH</name>
<accession>B1XB59</accession>
<keyword id="KW-0963">Cytoplasm</keyword>
<gene>
    <name evidence="1" type="primary">fdhE</name>
    <name type="ordered locus">ECDH10B_4081</name>
</gene>